<protein>
    <recommendedName>
        <fullName evidence="1">Probable phosphoglycerate mutase GpmB</fullName>
        <ecNumber evidence="1">5.4.2.-</ecNumber>
    </recommendedName>
    <alternativeName>
        <fullName evidence="1">PGAM</fullName>
    </alternativeName>
    <alternativeName>
        <fullName evidence="1">Phosphoglyceromutase</fullName>
    </alternativeName>
</protein>
<evidence type="ECO:0000255" key="1">
    <source>
        <dbReference type="HAMAP-Rule" id="MF_01040"/>
    </source>
</evidence>
<dbReference type="EC" id="5.4.2.-" evidence="1"/>
<dbReference type="EMBL" id="AE006468">
    <property type="protein sequence ID" value="AAL23400.1"/>
    <property type="molecule type" value="Genomic_DNA"/>
</dbReference>
<dbReference type="RefSeq" id="NP_463441.1">
    <property type="nucleotide sequence ID" value="NC_003197.2"/>
</dbReference>
<dbReference type="RefSeq" id="WP_000942363.1">
    <property type="nucleotide sequence ID" value="NC_003197.2"/>
</dbReference>
<dbReference type="SMR" id="Q8ZJU8"/>
<dbReference type="STRING" id="99287.STM4585"/>
<dbReference type="PaxDb" id="99287-STM4585"/>
<dbReference type="GeneID" id="1256111"/>
<dbReference type="KEGG" id="stm:STM4585"/>
<dbReference type="PATRIC" id="fig|99287.12.peg.4828"/>
<dbReference type="HOGENOM" id="CLU_033323_9_5_6"/>
<dbReference type="OMA" id="TEWNVAR"/>
<dbReference type="PhylomeDB" id="Q8ZJU8"/>
<dbReference type="BioCyc" id="SENT99287:STM4585-MONOMER"/>
<dbReference type="UniPathway" id="UPA00109">
    <property type="reaction ID" value="UER00186"/>
</dbReference>
<dbReference type="Proteomes" id="UP000001014">
    <property type="component" value="Chromosome"/>
</dbReference>
<dbReference type="GO" id="GO:0005737">
    <property type="term" value="C:cytoplasm"/>
    <property type="evidence" value="ECO:0000318"/>
    <property type="project" value="GO_Central"/>
</dbReference>
<dbReference type="GO" id="GO:0016791">
    <property type="term" value="F:phosphatase activity"/>
    <property type="evidence" value="ECO:0000318"/>
    <property type="project" value="GO_Central"/>
</dbReference>
<dbReference type="GO" id="GO:0004619">
    <property type="term" value="F:phosphoglycerate mutase activity"/>
    <property type="evidence" value="ECO:0007669"/>
    <property type="project" value="UniProtKB-UniRule"/>
</dbReference>
<dbReference type="GO" id="GO:0006096">
    <property type="term" value="P:glycolytic process"/>
    <property type="evidence" value="ECO:0007669"/>
    <property type="project" value="UniProtKB-UniRule"/>
</dbReference>
<dbReference type="CDD" id="cd07067">
    <property type="entry name" value="HP_PGM_like"/>
    <property type="match status" value="1"/>
</dbReference>
<dbReference type="Gene3D" id="3.40.50.1240">
    <property type="entry name" value="Phosphoglycerate mutase-like"/>
    <property type="match status" value="1"/>
</dbReference>
<dbReference type="HAMAP" id="MF_01040">
    <property type="entry name" value="PGAM_GpmB"/>
    <property type="match status" value="1"/>
</dbReference>
<dbReference type="InterPro" id="IPR013078">
    <property type="entry name" value="His_Pase_superF_clade-1"/>
</dbReference>
<dbReference type="InterPro" id="IPR029033">
    <property type="entry name" value="His_PPase_superfam"/>
</dbReference>
<dbReference type="InterPro" id="IPR001345">
    <property type="entry name" value="PG/BPGM_mutase_AS"/>
</dbReference>
<dbReference type="InterPro" id="IPR050275">
    <property type="entry name" value="PGM_Phosphatase"/>
</dbReference>
<dbReference type="InterPro" id="IPR023086">
    <property type="entry name" value="Phosphoglycerate_mutase_GpmB"/>
</dbReference>
<dbReference type="NCBIfam" id="NF002901">
    <property type="entry name" value="PRK03482.1"/>
    <property type="match status" value="1"/>
</dbReference>
<dbReference type="PANTHER" id="PTHR48100">
    <property type="entry name" value="BROAD-SPECIFICITY PHOSPHATASE YOR283W-RELATED"/>
    <property type="match status" value="1"/>
</dbReference>
<dbReference type="PANTHER" id="PTHR48100:SF1">
    <property type="entry name" value="HISTIDINE PHOSPHATASE FAMILY PROTEIN-RELATED"/>
    <property type="match status" value="1"/>
</dbReference>
<dbReference type="Pfam" id="PF00300">
    <property type="entry name" value="His_Phos_1"/>
    <property type="match status" value="1"/>
</dbReference>
<dbReference type="SMART" id="SM00855">
    <property type="entry name" value="PGAM"/>
    <property type="match status" value="1"/>
</dbReference>
<dbReference type="SUPFAM" id="SSF53254">
    <property type="entry name" value="Phosphoglycerate mutase-like"/>
    <property type="match status" value="1"/>
</dbReference>
<dbReference type="PROSITE" id="PS00175">
    <property type="entry name" value="PG_MUTASE"/>
    <property type="match status" value="1"/>
</dbReference>
<gene>
    <name evidence="1" type="primary">gpmB</name>
    <name type="ordered locus">STM4585</name>
</gene>
<accession>Q8ZJU8</accession>
<keyword id="KW-0324">Glycolysis</keyword>
<keyword id="KW-0413">Isomerase</keyword>
<keyword id="KW-1185">Reference proteome</keyword>
<feature type="chain" id="PRO_0000179951" description="Probable phosphoglycerate mutase GpmB">
    <location>
        <begin position="1"/>
        <end position="215"/>
    </location>
</feature>
<feature type="active site" description="Tele-phosphohistidine intermediate" evidence="1">
    <location>
        <position position="9"/>
    </location>
</feature>
<feature type="active site" description="Proton donor/acceptor" evidence="1">
    <location>
        <position position="82"/>
    </location>
</feature>
<feature type="binding site" evidence="1">
    <location>
        <begin position="8"/>
        <end position="15"/>
    </location>
    <ligand>
        <name>substrate</name>
    </ligand>
</feature>
<feature type="binding site" evidence="1">
    <location>
        <begin position="21"/>
        <end position="22"/>
    </location>
    <ligand>
        <name>substrate</name>
    </ligand>
</feature>
<feature type="binding site" evidence="1">
    <location>
        <position position="58"/>
    </location>
    <ligand>
        <name>substrate</name>
    </ligand>
</feature>
<feature type="binding site" evidence="1">
    <location>
        <position position="60"/>
    </location>
    <ligand>
        <name>substrate</name>
    </ligand>
</feature>
<feature type="binding site" evidence="1">
    <location>
        <begin position="82"/>
        <end position="85"/>
    </location>
    <ligand>
        <name>substrate</name>
    </ligand>
</feature>
<feature type="binding site" evidence="1">
    <location>
        <begin position="104"/>
        <end position="105"/>
    </location>
    <ligand>
        <name>substrate</name>
    </ligand>
</feature>
<feature type="binding site" evidence="1">
    <location>
        <begin position="151"/>
        <end position="152"/>
    </location>
    <ligand>
        <name>substrate</name>
    </ligand>
</feature>
<feature type="site" description="Transition state stabilizer" evidence="1">
    <location>
        <position position="150"/>
    </location>
</feature>
<proteinExistence type="inferred from homology"/>
<name>GPMB_SALTY</name>
<comment type="catalytic activity">
    <reaction evidence="1">
        <text>(2R)-2-phosphoglycerate = (2R)-3-phosphoglycerate</text>
        <dbReference type="Rhea" id="RHEA:15901"/>
        <dbReference type="ChEBI" id="CHEBI:58272"/>
        <dbReference type="ChEBI" id="CHEBI:58289"/>
    </reaction>
</comment>
<comment type="pathway">
    <text evidence="1">Carbohydrate degradation; glycolysis; pyruvate from D-glyceraldehyde 3-phosphate: step 3/5.</text>
</comment>
<comment type="similarity">
    <text evidence="1">Belongs to the phosphoglycerate mutase family. GpmB subfamily.</text>
</comment>
<sequence>MLQVYLVRHGETQWNAERRIQGQSDSPLTAKGEQQAMQVGERARSLGITHIISSDLGRTKRTAEIIAQACGCDITFDSRLRELDMGVLEKRQIDSLTEEEEGWRRQLVNGTQDGRIPGGESMQELSDRVHAALASCLELPQGSRPLLVSHGIALGCLVSTILGLPAWAERRLRLRNCSISRIDYQESQWLASGWVVETAGDVSHLDAPALDELQR</sequence>
<organism>
    <name type="scientific">Salmonella typhimurium (strain LT2 / SGSC1412 / ATCC 700720)</name>
    <dbReference type="NCBI Taxonomy" id="99287"/>
    <lineage>
        <taxon>Bacteria</taxon>
        <taxon>Pseudomonadati</taxon>
        <taxon>Pseudomonadota</taxon>
        <taxon>Gammaproteobacteria</taxon>
        <taxon>Enterobacterales</taxon>
        <taxon>Enterobacteriaceae</taxon>
        <taxon>Salmonella</taxon>
    </lineage>
</organism>
<reference key="1">
    <citation type="journal article" date="2001" name="Nature">
        <title>Complete genome sequence of Salmonella enterica serovar Typhimurium LT2.</title>
        <authorList>
            <person name="McClelland M."/>
            <person name="Sanderson K.E."/>
            <person name="Spieth J."/>
            <person name="Clifton S.W."/>
            <person name="Latreille P."/>
            <person name="Courtney L."/>
            <person name="Porwollik S."/>
            <person name="Ali J."/>
            <person name="Dante M."/>
            <person name="Du F."/>
            <person name="Hou S."/>
            <person name="Layman D."/>
            <person name="Leonard S."/>
            <person name="Nguyen C."/>
            <person name="Scott K."/>
            <person name="Holmes A."/>
            <person name="Grewal N."/>
            <person name="Mulvaney E."/>
            <person name="Ryan E."/>
            <person name="Sun H."/>
            <person name="Florea L."/>
            <person name="Miller W."/>
            <person name="Stoneking T."/>
            <person name="Nhan M."/>
            <person name="Waterston R."/>
            <person name="Wilson R.K."/>
        </authorList>
    </citation>
    <scope>NUCLEOTIDE SEQUENCE [LARGE SCALE GENOMIC DNA]</scope>
    <source>
        <strain>LT2 / SGSC1412 / ATCC 700720</strain>
    </source>
</reference>